<gene>
    <name evidence="1" type="primary">queF</name>
    <name type="ordered locus">BPP1768</name>
</gene>
<organism>
    <name type="scientific">Bordetella parapertussis (strain 12822 / ATCC BAA-587 / NCTC 13253)</name>
    <dbReference type="NCBI Taxonomy" id="257311"/>
    <lineage>
        <taxon>Bacteria</taxon>
        <taxon>Pseudomonadati</taxon>
        <taxon>Pseudomonadota</taxon>
        <taxon>Betaproteobacteria</taxon>
        <taxon>Burkholderiales</taxon>
        <taxon>Alcaligenaceae</taxon>
        <taxon>Bordetella</taxon>
    </lineage>
</organism>
<reference key="1">
    <citation type="journal article" date="2003" name="Nat. Genet.">
        <title>Comparative analysis of the genome sequences of Bordetella pertussis, Bordetella parapertussis and Bordetella bronchiseptica.</title>
        <authorList>
            <person name="Parkhill J."/>
            <person name="Sebaihia M."/>
            <person name="Preston A."/>
            <person name="Murphy L.D."/>
            <person name="Thomson N.R."/>
            <person name="Harris D.E."/>
            <person name="Holden M.T.G."/>
            <person name="Churcher C.M."/>
            <person name="Bentley S.D."/>
            <person name="Mungall K.L."/>
            <person name="Cerdeno-Tarraga A.-M."/>
            <person name="Temple L."/>
            <person name="James K.D."/>
            <person name="Harris B."/>
            <person name="Quail M.A."/>
            <person name="Achtman M."/>
            <person name="Atkin R."/>
            <person name="Baker S."/>
            <person name="Basham D."/>
            <person name="Bason N."/>
            <person name="Cherevach I."/>
            <person name="Chillingworth T."/>
            <person name="Collins M."/>
            <person name="Cronin A."/>
            <person name="Davis P."/>
            <person name="Doggett J."/>
            <person name="Feltwell T."/>
            <person name="Goble A."/>
            <person name="Hamlin N."/>
            <person name="Hauser H."/>
            <person name="Holroyd S."/>
            <person name="Jagels K."/>
            <person name="Leather S."/>
            <person name="Moule S."/>
            <person name="Norberczak H."/>
            <person name="O'Neil S."/>
            <person name="Ormond D."/>
            <person name="Price C."/>
            <person name="Rabbinowitsch E."/>
            <person name="Rutter S."/>
            <person name="Sanders M."/>
            <person name="Saunders D."/>
            <person name="Seeger K."/>
            <person name="Sharp S."/>
            <person name="Simmonds M."/>
            <person name="Skelton J."/>
            <person name="Squares R."/>
            <person name="Squares S."/>
            <person name="Stevens K."/>
            <person name="Unwin L."/>
            <person name="Whitehead S."/>
            <person name="Barrell B.G."/>
            <person name="Maskell D.J."/>
        </authorList>
    </citation>
    <scope>NUCLEOTIDE SEQUENCE [LARGE SCALE GENOMIC DNA]</scope>
    <source>
        <strain>12822 / ATCC BAA-587 / NCTC 13253</strain>
    </source>
</reference>
<name>QUEF_BORPA</name>
<dbReference type="EC" id="1.7.1.13" evidence="1"/>
<dbReference type="EMBL" id="BX640428">
    <property type="protein sequence ID" value="CAE37069.1"/>
    <property type="molecule type" value="Genomic_DNA"/>
</dbReference>
<dbReference type="RefSeq" id="WP_010928197.1">
    <property type="nucleotide sequence ID" value="NC_002928.3"/>
</dbReference>
<dbReference type="SMR" id="Q7W9J1"/>
<dbReference type="GeneID" id="93203532"/>
<dbReference type="KEGG" id="bpa:BPP1768"/>
<dbReference type="HOGENOM" id="CLU_054738_0_0_4"/>
<dbReference type="UniPathway" id="UPA00392"/>
<dbReference type="Proteomes" id="UP000001421">
    <property type="component" value="Chromosome"/>
</dbReference>
<dbReference type="GO" id="GO:0005737">
    <property type="term" value="C:cytoplasm"/>
    <property type="evidence" value="ECO:0007669"/>
    <property type="project" value="UniProtKB-SubCell"/>
</dbReference>
<dbReference type="GO" id="GO:0033739">
    <property type="term" value="F:preQ1 synthase activity"/>
    <property type="evidence" value="ECO:0007669"/>
    <property type="project" value="UniProtKB-UniRule"/>
</dbReference>
<dbReference type="GO" id="GO:0008616">
    <property type="term" value="P:queuosine biosynthetic process"/>
    <property type="evidence" value="ECO:0007669"/>
    <property type="project" value="UniProtKB-UniRule"/>
</dbReference>
<dbReference type="GO" id="GO:0006400">
    <property type="term" value="P:tRNA modification"/>
    <property type="evidence" value="ECO:0007669"/>
    <property type="project" value="UniProtKB-UniRule"/>
</dbReference>
<dbReference type="Gene3D" id="3.30.1130.10">
    <property type="match status" value="2"/>
</dbReference>
<dbReference type="HAMAP" id="MF_00817">
    <property type="entry name" value="QueF_type2"/>
    <property type="match status" value="1"/>
</dbReference>
<dbReference type="InterPro" id="IPR043133">
    <property type="entry name" value="GTP-CH-I_C/QueF"/>
</dbReference>
<dbReference type="InterPro" id="IPR050084">
    <property type="entry name" value="NADPH_dep_7-cyano-7-deazaG_red"/>
</dbReference>
<dbReference type="InterPro" id="IPR029500">
    <property type="entry name" value="QueF"/>
</dbReference>
<dbReference type="InterPro" id="IPR029139">
    <property type="entry name" value="QueF_N"/>
</dbReference>
<dbReference type="InterPro" id="IPR016428">
    <property type="entry name" value="QueF_type2"/>
</dbReference>
<dbReference type="NCBIfam" id="TIGR03138">
    <property type="entry name" value="QueF"/>
    <property type="match status" value="1"/>
</dbReference>
<dbReference type="PANTHER" id="PTHR34354">
    <property type="entry name" value="NADPH-DEPENDENT 7-CYANO-7-DEAZAGUANINE REDUCTASE"/>
    <property type="match status" value="1"/>
</dbReference>
<dbReference type="PANTHER" id="PTHR34354:SF1">
    <property type="entry name" value="NADPH-DEPENDENT 7-CYANO-7-DEAZAGUANINE REDUCTASE"/>
    <property type="match status" value="1"/>
</dbReference>
<dbReference type="Pfam" id="PF14489">
    <property type="entry name" value="QueF"/>
    <property type="match status" value="1"/>
</dbReference>
<dbReference type="Pfam" id="PF14819">
    <property type="entry name" value="QueF_N"/>
    <property type="match status" value="1"/>
</dbReference>
<dbReference type="PIRSF" id="PIRSF004750">
    <property type="entry name" value="Nitrile_oxidored_YqcD_prd"/>
    <property type="match status" value="1"/>
</dbReference>
<dbReference type="SUPFAM" id="SSF55620">
    <property type="entry name" value="Tetrahydrobiopterin biosynthesis enzymes-like"/>
    <property type="match status" value="1"/>
</dbReference>
<sequence length="273" mass="30650">MSLSNAPLGQHVAYPSQYDPGLLFPIPRATNRASLQLGATLPFTGVDLWNAYELSWLDARGKPRVAMATFSFPADSPNIVESKSFKLYLNSFNQTRLPNAQALRDRLERDLAAAAGAPVGLKFISPQRFGELNMAELDGIYIDKLDIEIDTYEPAPQLLQCAPGDEVEETLATRLLKSNCPVTGQPDWASLQVRYRGRPIDRAALLKYVVSFRQHAEFHEHCVERIFGDIMRACQPRQLTVYARYTRRGGLDINPWRSNFESAPPADVRTARQ</sequence>
<comment type="function">
    <text evidence="1">Catalyzes the NADPH-dependent reduction of 7-cyano-7-deazaguanine (preQ0) to 7-aminomethyl-7-deazaguanine (preQ1).</text>
</comment>
<comment type="catalytic activity">
    <reaction evidence="1">
        <text>7-aminomethyl-7-carbaguanine + 2 NADP(+) = 7-cyano-7-deazaguanine + 2 NADPH + 3 H(+)</text>
        <dbReference type="Rhea" id="RHEA:13409"/>
        <dbReference type="ChEBI" id="CHEBI:15378"/>
        <dbReference type="ChEBI" id="CHEBI:45075"/>
        <dbReference type="ChEBI" id="CHEBI:57783"/>
        <dbReference type="ChEBI" id="CHEBI:58349"/>
        <dbReference type="ChEBI" id="CHEBI:58703"/>
        <dbReference type="EC" id="1.7.1.13"/>
    </reaction>
</comment>
<comment type="pathway">
    <text evidence="1">tRNA modification; tRNA-queuosine biosynthesis.</text>
</comment>
<comment type="subunit">
    <text evidence="1">Homodimer.</text>
</comment>
<comment type="subcellular location">
    <subcellularLocation>
        <location evidence="1">Cytoplasm</location>
    </subcellularLocation>
</comment>
<comment type="similarity">
    <text evidence="1">Belongs to the GTP cyclohydrolase I family. QueF type 2 subfamily.</text>
</comment>
<keyword id="KW-0963">Cytoplasm</keyword>
<keyword id="KW-0521">NADP</keyword>
<keyword id="KW-0560">Oxidoreductase</keyword>
<keyword id="KW-0671">Queuosine biosynthesis</keyword>
<proteinExistence type="inferred from homology"/>
<protein>
    <recommendedName>
        <fullName evidence="1">NADPH-dependent 7-cyano-7-deazaguanine reductase</fullName>
        <ecNumber evidence="1">1.7.1.13</ecNumber>
    </recommendedName>
    <alternativeName>
        <fullName evidence="1">7-cyano-7-carbaguanine reductase</fullName>
    </alternativeName>
    <alternativeName>
        <fullName evidence="1">NADPH-dependent nitrile oxidoreductase</fullName>
    </alternativeName>
    <alternativeName>
        <fullName evidence="1">PreQ(0) reductase</fullName>
    </alternativeName>
</protein>
<feature type="chain" id="PRO_0000163021" description="NADPH-dependent 7-cyano-7-deazaguanine reductase">
    <location>
        <begin position="1"/>
        <end position="273"/>
    </location>
</feature>
<feature type="active site" description="Thioimide intermediate" evidence="1">
    <location>
        <position position="180"/>
    </location>
</feature>
<feature type="active site" description="Proton donor" evidence="1">
    <location>
        <position position="187"/>
    </location>
</feature>
<feature type="binding site" evidence="1">
    <location>
        <begin position="80"/>
        <end position="82"/>
    </location>
    <ligand>
        <name>substrate</name>
    </ligand>
</feature>
<feature type="binding site" evidence="1">
    <location>
        <begin position="82"/>
        <end position="83"/>
    </location>
    <ligand>
        <name>NADPH</name>
        <dbReference type="ChEBI" id="CHEBI:57783"/>
    </ligand>
</feature>
<feature type="binding site" evidence="1">
    <location>
        <begin position="219"/>
        <end position="220"/>
    </location>
    <ligand>
        <name>substrate</name>
    </ligand>
</feature>
<feature type="binding site" evidence="1">
    <location>
        <begin position="248"/>
        <end position="249"/>
    </location>
    <ligand>
        <name>NADPH</name>
        <dbReference type="ChEBI" id="CHEBI:57783"/>
    </ligand>
</feature>
<evidence type="ECO:0000255" key="1">
    <source>
        <dbReference type="HAMAP-Rule" id="MF_00817"/>
    </source>
</evidence>
<accession>Q7W9J1</accession>